<keyword id="KW-0997">Cell inner membrane</keyword>
<keyword id="KW-1003">Cell membrane</keyword>
<keyword id="KW-0472">Membrane</keyword>
<keyword id="KW-0520">NAD</keyword>
<keyword id="KW-0874">Quinone</keyword>
<keyword id="KW-1278">Translocase</keyword>
<keyword id="KW-0812">Transmembrane</keyword>
<keyword id="KW-1133">Transmembrane helix</keyword>
<keyword id="KW-0813">Transport</keyword>
<keyword id="KW-0830">Ubiquinone</keyword>
<accession>A3NTA6</accession>
<gene>
    <name evidence="1" type="primary">nuoA</name>
    <name type="ordered locus">BURPS1106A_1299</name>
</gene>
<evidence type="ECO:0000255" key="1">
    <source>
        <dbReference type="HAMAP-Rule" id="MF_01394"/>
    </source>
</evidence>
<proteinExistence type="inferred from homology"/>
<name>NUOA_BURP0</name>
<feature type="chain" id="PRO_0000362646" description="NADH-quinone oxidoreductase subunit A">
    <location>
        <begin position="1"/>
        <end position="119"/>
    </location>
</feature>
<feature type="transmembrane region" description="Helical" evidence="1">
    <location>
        <begin position="7"/>
        <end position="27"/>
    </location>
</feature>
<feature type="transmembrane region" description="Helical" evidence="1">
    <location>
        <begin position="63"/>
        <end position="83"/>
    </location>
</feature>
<feature type="transmembrane region" description="Helical" evidence="1">
    <location>
        <begin position="88"/>
        <end position="108"/>
    </location>
</feature>
<sequence length="119" mass="13513">MNLAAYYPVLLFLLVGTGLGIALVSIGKILGPNKPDSEKNAPYECGFEAFEDARMKFDVRYYLVAILFIIFDLETAFLFPWGVALREIGWPGFIAMMIFLLEFLLGFAYIWKKGGLDWE</sequence>
<organism>
    <name type="scientific">Burkholderia pseudomallei (strain 1106a)</name>
    <dbReference type="NCBI Taxonomy" id="357348"/>
    <lineage>
        <taxon>Bacteria</taxon>
        <taxon>Pseudomonadati</taxon>
        <taxon>Pseudomonadota</taxon>
        <taxon>Betaproteobacteria</taxon>
        <taxon>Burkholderiales</taxon>
        <taxon>Burkholderiaceae</taxon>
        <taxon>Burkholderia</taxon>
        <taxon>pseudomallei group</taxon>
    </lineage>
</organism>
<protein>
    <recommendedName>
        <fullName evidence="1">NADH-quinone oxidoreductase subunit A</fullName>
        <ecNumber evidence="1">7.1.1.-</ecNumber>
    </recommendedName>
    <alternativeName>
        <fullName evidence="1">NADH dehydrogenase I subunit A</fullName>
    </alternativeName>
    <alternativeName>
        <fullName evidence="1">NDH-1 subunit A</fullName>
    </alternativeName>
    <alternativeName>
        <fullName evidence="1">NUO1</fullName>
    </alternativeName>
</protein>
<reference key="1">
    <citation type="journal article" date="2010" name="Genome Biol. Evol.">
        <title>Continuing evolution of Burkholderia mallei through genome reduction and large-scale rearrangements.</title>
        <authorList>
            <person name="Losada L."/>
            <person name="Ronning C.M."/>
            <person name="DeShazer D."/>
            <person name="Woods D."/>
            <person name="Fedorova N."/>
            <person name="Kim H.S."/>
            <person name="Shabalina S.A."/>
            <person name="Pearson T.R."/>
            <person name="Brinkac L."/>
            <person name="Tan P."/>
            <person name="Nandi T."/>
            <person name="Crabtree J."/>
            <person name="Badger J."/>
            <person name="Beckstrom-Sternberg S."/>
            <person name="Saqib M."/>
            <person name="Schutzer S.E."/>
            <person name="Keim P."/>
            <person name="Nierman W.C."/>
        </authorList>
    </citation>
    <scope>NUCLEOTIDE SEQUENCE [LARGE SCALE GENOMIC DNA]</scope>
    <source>
        <strain>1106a</strain>
    </source>
</reference>
<comment type="function">
    <text evidence="1">NDH-1 shuttles electrons from NADH, via FMN and iron-sulfur (Fe-S) centers, to quinones in the respiratory chain. The immediate electron acceptor for the enzyme in this species is believed to be ubiquinone. Couples the redox reaction to proton translocation (for every two electrons transferred, four hydrogen ions are translocated across the cytoplasmic membrane), and thus conserves the redox energy in a proton gradient.</text>
</comment>
<comment type="catalytic activity">
    <reaction evidence="1">
        <text>a quinone + NADH + 5 H(+)(in) = a quinol + NAD(+) + 4 H(+)(out)</text>
        <dbReference type="Rhea" id="RHEA:57888"/>
        <dbReference type="ChEBI" id="CHEBI:15378"/>
        <dbReference type="ChEBI" id="CHEBI:24646"/>
        <dbReference type="ChEBI" id="CHEBI:57540"/>
        <dbReference type="ChEBI" id="CHEBI:57945"/>
        <dbReference type="ChEBI" id="CHEBI:132124"/>
    </reaction>
</comment>
<comment type="subunit">
    <text evidence="1">NDH-1 is composed of 14 different subunits. Subunits NuoA, H, J, K, L, M, N constitute the membrane sector of the complex.</text>
</comment>
<comment type="subcellular location">
    <subcellularLocation>
        <location evidence="1">Cell inner membrane</location>
        <topology evidence="1">Multi-pass membrane protein</topology>
    </subcellularLocation>
</comment>
<comment type="similarity">
    <text evidence="1">Belongs to the complex I subunit 3 family.</text>
</comment>
<dbReference type="EC" id="7.1.1.-" evidence="1"/>
<dbReference type="EMBL" id="CP000572">
    <property type="protein sequence ID" value="ABN89876.1"/>
    <property type="molecule type" value="Genomic_DNA"/>
</dbReference>
<dbReference type="RefSeq" id="WP_004186624.1">
    <property type="nucleotide sequence ID" value="NC_009076.1"/>
</dbReference>
<dbReference type="SMR" id="A3NTA6"/>
<dbReference type="KEGG" id="bpl:BURPS1106A_1299"/>
<dbReference type="HOGENOM" id="CLU_119549_3_1_4"/>
<dbReference type="Proteomes" id="UP000006738">
    <property type="component" value="Chromosome I"/>
</dbReference>
<dbReference type="GO" id="GO:0030964">
    <property type="term" value="C:NADH dehydrogenase complex"/>
    <property type="evidence" value="ECO:0007669"/>
    <property type="project" value="TreeGrafter"/>
</dbReference>
<dbReference type="GO" id="GO:0005886">
    <property type="term" value="C:plasma membrane"/>
    <property type="evidence" value="ECO:0007669"/>
    <property type="project" value="UniProtKB-SubCell"/>
</dbReference>
<dbReference type="GO" id="GO:0008137">
    <property type="term" value="F:NADH dehydrogenase (ubiquinone) activity"/>
    <property type="evidence" value="ECO:0007669"/>
    <property type="project" value="InterPro"/>
</dbReference>
<dbReference type="GO" id="GO:0050136">
    <property type="term" value="F:NADH:ubiquinone reductase (non-electrogenic) activity"/>
    <property type="evidence" value="ECO:0007669"/>
    <property type="project" value="UniProtKB-UniRule"/>
</dbReference>
<dbReference type="GO" id="GO:0048038">
    <property type="term" value="F:quinone binding"/>
    <property type="evidence" value="ECO:0007669"/>
    <property type="project" value="UniProtKB-KW"/>
</dbReference>
<dbReference type="FunFam" id="1.20.58.1610:FF:000004">
    <property type="entry name" value="NADH-quinone oxidoreductase subunit A"/>
    <property type="match status" value="1"/>
</dbReference>
<dbReference type="Gene3D" id="1.20.58.1610">
    <property type="entry name" value="NADH:ubiquinone/plastoquinone oxidoreductase, chain 3"/>
    <property type="match status" value="1"/>
</dbReference>
<dbReference type="HAMAP" id="MF_01394">
    <property type="entry name" value="NDH1_NuoA"/>
    <property type="match status" value="1"/>
</dbReference>
<dbReference type="InterPro" id="IPR023043">
    <property type="entry name" value="NAD(P)H_OxRDtase_bac/plastid"/>
</dbReference>
<dbReference type="InterPro" id="IPR000440">
    <property type="entry name" value="NADH_UbQ/plastoQ_OxRdtase_su3"/>
</dbReference>
<dbReference type="InterPro" id="IPR038430">
    <property type="entry name" value="NDAH_ubi_oxred_su3_sf"/>
</dbReference>
<dbReference type="PANTHER" id="PTHR11058">
    <property type="entry name" value="NADH-UBIQUINONE OXIDOREDUCTASE CHAIN 3"/>
    <property type="match status" value="1"/>
</dbReference>
<dbReference type="PANTHER" id="PTHR11058:SF9">
    <property type="entry name" value="NADH-UBIQUINONE OXIDOREDUCTASE CHAIN 3"/>
    <property type="match status" value="1"/>
</dbReference>
<dbReference type="Pfam" id="PF00507">
    <property type="entry name" value="Oxidored_q4"/>
    <property type="match status" value="1"/>
</dbReference>